<proteinExistence type="evidence at transcript level"/>
<keyword id="KW-0007">Acetylation</keyword>
<keyword id="KW-0274">FAD</keyword>
<keyword id="KW-0276">Fatty acid metabolism</keyword>
<keyword id="KW-0285">Flavoprotein</keyword>
<keyword id="KW-0443">Lipid metabolism</keyword>
<keyword id="KW-0496">Mitochondrion</keyword>
<keyword id="KW-0560">Oxidoreductase</keyword>
<keyword id="KW-0597">Phosphoprotein</keyword>
<keyword id="KW-1185">Reference proteome</keyword>
<keyword id="KW-0809">Transit peptide</keyword>
<accession>P79273</accession>
<name>ACADS_PIG</name>
<dbReference type="EC" id="1.3.8.1" evidence="3"/>
<dbReference type="EMBL" id="D89477">
    <property type="protein sequence ID" value="BAA13964.1"/>
    <property type="molecule type" value="mRNA"/>
</dbReference>
<dbReference type="RefSeq" id="NP_999063.1">
    <property type="nucleotide sequence ID" value="NM_213898.1"/>
</dbReference>
<dbReference type="SMR" id="P79273"/>
<dbReference type="FunCoup" id="P79273">
    <property type="interactions" value="898"/>
</dbReference>
<dbReference type="STRING" id="9823.ENSSSCP00000040335"/>
<dbReference type="GlyGen" id="P79273">
    <property type="glycosylation" value="1 site"/>
</dbReference>
<dbReference type="PaxDb" id="9823-ENSSSCP00000010581"/>
<dbReference type="PeptideAtlas" id="P79273"/>
<dbReference type="GeneID" id="396932"/>
<dbReference type="KEGG" id="ssc:396932"/>
<dbReference type="CTD" id="35"/>
<dbReference type="eggNOG" id="KOG0139">
    <property type="taxonomic scope" value="Eukaryota"/>
</dbReference>
<dbReference type="InParanoid" id="P79273"/>
<dbReference type="OrthoDB" id="9988775at2759"/>
<dbReference type="UniPathway" id="UPA00660"/>
<dbReference type="Proteomes" id="UP000008227">
    <property type="component" value="Unplaced"/>
</dbReference>
<dbReference type="Proteomes" id="UP000314985">
    <property type="component" value="Unplaced"/>
</dbReference>
<dbReference type="Proteomes" id="UP000694570">
    <property type="component" value="Unplaced"/>
</dbReference>
<dbReference type="Proteomes" id="UP000694571">
    <property type="component" value="Unplaced"/>
</dbReference>
<dbReference type="Proteomes" id="UP000694720">
    <property type="component" value="Unplaced"/>
</dbReference>
<dbReference type="Proteomes" id="UP000694722">
    <property type="component" value="Unplaced"/>
</dbReference>
<dbReference type="Proteomes" id="UP000694723">
    <property type="component" value="Unplaced"/>
</dbReference>
<dbReference type="Proteomes" id="UP000694724">
    <property type="component" value="Unplaced"/>
</dbReference>
<dbReference type="Proteomes" id="UP000694725">
    <property type="component" value="Unplaced"/>
</dbReference>
<dbReference type="Proteomes" id="UP000694726">
    <property type="component" value="Unplaced"/>
</dbReference>
<dbReference type="Proteomes" id="UP000694727">
    <property type="component" value="Unplaced"/>
</dbReference>
<dbReference type="Proteomes" id="UP000694728">
    <property type="component" value="Unplaced"/>
</dbReference>
<dbReference type="GO" id="GO:0005759">
    <property type="term" value="C:mitochondrial matrix"/>
    <property type="evidence" value="ECO:0000250"/>
    <property type="project" value="UniProtKB"/>
</dbReference>
<dbReference type="GO" id="GO:0005739">
    <property type="term" value="C:mitochondrion"/>
    <property type="evidence" value="ECO:0000318"/>
    <property type="project" value="GO_Central"/>
</dbReference>
<dbReference type="GO" id="GO:0003995">
    <property type="term" value="F:acyl-CoA dehydrogenase activity"/>
    <property type="evidence" value="ECO:0000250"/>
    <property type="project" value="UniProtKB"/>
</dbReference>
<dbReference type="GO" id="GO:0050660">
    <property type="term" value="F:flavin adenine dinucleotide binding"/>
    <property type="evidence" value="ECO:0007669"/>
    <property type="project" value="InterPro"/>
</dbReference>
<dbReference type="GO" id="GO:0016937">
    <property type="term" value="F:short-chain fatty acyl-CoA dehydrogenase activity"/>
    <property type="evidence" value="ECO:0000250"/>
    <property type="project" value="UniProtKB"/>
</dbReference>
<dbReference type="GO" id="GO:0046359">
    <property type="term" value="P:butyrate catabolic process"/>
    <property type="evidence" value="ECO:0000318"/>
    <property type="project" value="GO_Central"/>
</dbReference>
<dbReference type="GO" id="GO:0033539">
    <property type="term" value="P:fatty acid beta-oxidation using acyl-CoA dehydrogenase"/>
    <property type="evidence" value="ECO:0000318"/>
    <property type="project" value="GO_Central"/>
</dbReference>
<dbReference type="CDD" id="cd01158">
    <property type="entry name" value="SCAD_SBCAD"/>
    <property type="match status" value="1"/>
</dbReference>
<dbReference type="FunFam" id="1.10.540.10:FF:000002">
    <property type="entry name" value="Acyl-CoA dehydrogenase FadE19"/>
    <property type="match status" value="1"/>
</dbReference>
<dbReference type="FunFam" id="1.20.140.10:FF:000004">
    <property type="entry name" value="Acyl-CoA dehydrogenase FadE25"/>
    <property type="match status" value="1"/>
</dbReference>
<dbReference type="FunFam" id="2.40.110.10:FF:000001">
    <property type="entry name" value="Acyl-CoA dehydrogenase, mitochondrial"/>
    <property type="match status" value="1"/>
</dbReference>
<dbReference type="Gene3D" id="1.10.540.10">
    <property type="entry name" value="Acyl-CoA dehydrogenase/oxidase, N-terminal domain"/>
    <property type="match status" value="1"/>
</dbReference>
<dbReference type="Gene3D" id="2.40.110.10">
    <property type="entry name" value="Butyryl-CoA Dehydrogenase, subunit A, domain 2"/>
    <property type="match status" value="1"/>
</dbReference>
<dbReference type="Gene3D" id="1.20.140.10">
    <property type="entry name" value="Butyryl-CoA Dehydrogenase, subunit A, domain 3"/>
    <property type="match status" value="1"/>
</dbReference>
<dbReference type="InterPro" id="IPR006089">
    <property type="entry name" value="Acyl-CoA_DH_CS"/>
</dbReference>
<dbReference type="InterPro" id="IPR006091">
    <property type="entry name" value="Acyl-CoA_Oxase/DH_mid-dom"/>
</dbReference>
<dbReference type="InterPro" id="IPR046373">
    <property type="entry name" value="Acyl-CoA_Oxase/DH_mid-dom_sf"/>
</dbReference>
<dbReference type="InterPro" id="IPR036250">
    <property type="entry name" value="AcylCo_DH-like_C"/>
</dbReference>
<dbReference type="InterPro" id="IPR009075">
    <property type="entry name" value="AcylCo_DH/oxidase_C"/>
</dbReference>
<dbReference type="InterPro" id="IPR013786">
    <property type="entry name" value="AcylCoA_DH/ox_N"/>
</dbReference>
<dbReference type="InterPro" id="IPR037069">
    <property type="entry name" value="AcylCoA_DH/ox_N_sf"/>
</dbReference>
<dbReference type="InterPro" id="IPR009100">
    <property type="entry name" value="AcylCoA_DH/oxidase_NM_dom_sf"/>
</dbReference>
<dbReference type="PANTHER" id="PTHR43884">
    <property type="entry name" value="ACYL-COA DEHYDROGENASE"/>
    <property type="match status" value="1"/>
</dbReference>
<dbReference type="PANTHER" id="PTHR43884:SF12">
    <property type="entry name" value="ISOVALERYL-COA DEHYDROGENASE, MITOCHONDRIAL-RELATED"/>
    <property type="match status" value="1"/>
</dbReference>
<dbReference type="Pfam" id="PF00441">
    <property type="entry name" value="Acyl-CoA_dh_1"/>
    <property type="match status" value="1"/>
</dbReference>
<dbReference type="Pfam" id="PF02770">
    <property type="entry name" value="Acyl-CoA_dh_M"/>
    <property type="match status" value="1"/>
</dbReference>
<dbReference type="Pfam" id="PF02771">
    <property type="entry name" value="Acyl-CoA_dh_N"/>
    <property type="match status" value="1"/>
</dbReference>
<dbReference type="PIRSF" id="PIRSF016578">
    <property type="entry name" value="HsaA"/>
    <property type="match status" value="1"/>
</dbReference>
<dbReference type="SUPFAM" id="SSF47203">
    <property type="entry name" value="Acyl-CoA dehydrogenase C-terminal domain-like"/>
    <property type="match status" value="1"/>
</dbReference>
<dbReference type="SUPFAM" id="SSF56645">
    <property type="entry name" value="Acyl-CoA dehydrogenase NM domain-like"/>
    <property type="match status" value="1"/>
</dbReference>
<dbReference type="PROSITE" id="PS00072">
    <property type="entry name" value="ACYL_COA_DH_1"/>
    <property type="match status" value="1"/>
</dbReference>
<dbReference type="PROSITE" id="PS00073">
    <property type="entry name" value="ACYL_COA_DH_2"/>
    <property type="match status" value="1"/>
</dbReference>
<evidence type="ECO:0000250" key="1"/>
<evidence type="ECO:0000250" key="2">
    <source>
        <dbReference type="UniProtKB" id="P15651"/>
    </source>
</evidence>
<evidence type="ECO:0000250" key="3">
    <source>
        <dbReference type="UniProtKB" id="P16219"/>
    </source>
</evidence>
<evidence type="ECO:0000250" key="4">
    <source>
        <dbReference type="UniProtKB" id="Q07417"/>
    </source>
</evidence>
<evidence type="ECO:0000250" key="5">
    <source>
        <dbReference type="UniProtKB" id="Q3ZBF6"/>
    </source>
</evidence>
<evidence type="ECO:0000305" key="6"/>
<feature type="transit peptide" description="Mitochondrion" evidence="2">
    <location>
        <begin position="1"/>
        <end position="24"/>
    </location>
</feature>
<feature type="chain" id="PRO_0000000500" description="Short-chain specific acyl-CoA dehydrogenase, mitochondrial">
    <location>
        <begin position="25"/>
        <end position="413"/>
    </location>
</feature>
<feature type="active site" description="Proton acceptor" evidence="2">
    <location>
        <position position="393"/>
    </location>
</feature>
<feature type="binding site" description="in other chain" evidence="2">
    <location>
        <begin position="152"/>
        <end position="161"/>
    </location>
    <ligand>
        <name>FAD</name>
        <dbReference type="ChEBI" id="CHEBI:57692"/>
        <note>ligand shared between dimeric partners</note>
    </ligand>
</feature>
<feature type="binding site" evidence="2">
    <location>
        <position position="161"/>
    </location>
    <ligand>
        <name>substrate</name>
    </ligand>
</feature>
<feature type="binding site" description="in other chain" evidence="2">
    <location>
        <begin position="185"/>
        <end position="187"/>
    </location>
    <ligand>
        <name>FAD</name>
        <dbReference type="ChEBI" id="CHEBI:57692"/>
        <note>ligand shared between dimeric partners</note>
    </ligand>
</feature>
<feature type="binding site" evidence="2">
    <location>
        <begin position="269"/>
        <end position="272"/>
    </location>
    <ligand>
        <name>substrate</name>
    </ligand>
</feature>
<feature type="binding site" evidence="2">
    <location>
        <position position="297"/>
    </location>
    <ligand>
        <name>FAD</name>
        <dbReference type="ChEBI" id="CHEBI:57692"/>
        <note>ligand shared between dimeric partners</note>
    </ligand>
</feature>
<feature type="binding site" description="in other chain" evidence="1">
    <location>
        <position position="308"/>
    </location>
    <ligand>
        <name>FAD</name>
        <dbReference type="ChEBI" id="CHEBI:57692"/>
        <note>ligand shared between dimeric partners</note>
    </ligand>
</feature>
<feature type="binding site" description="in other chain" evidence="2">
    <location>
        <begin position="366"/>
        <end position="370"/>
    </location>
    <ligand>
        <name>FAD</name>
        <dbReference type="ChEBI" id="CHEBI:57692"/>
        <note>ligand shared between dimeric partners</note>
    </ligand>
</feature>
<feature type="binding site" evidence="2">
    <location>
        <position position="394"/>
    </location>
    <ligand>
        <name>substrate</name>
    </ligand>
</feature>
<feature type="binding site" description="in other chain" evidence="2">
    <location>
        <begin position="395"/>
        <end position="397"/>
    </location>
    <ligand>
        <name>FAD</name>
        <dbReference type="ChEBI" id="CHEBI:57692"/>
        <note>ligand shared between dimeric partners</note>
    </ligand>
</feature>
<feature type="modified residue" description="Phosphothreonine" evidence="4">
    <location>
        <position position="27"/>
    </location>
</feature>
<feature type="modified residue" description="N6-acetyllysine; alternate" evidence="4">
    <location>
        <position position="51"/>
    </location>
</feature>
<feature type="modified residue" description="N6-succinyllysine; alternate" evidence="4">
    <location>
        <position position="51"/>
    </location>
</feature>
<feature type="modified residue" description="N6-acetyllysine" evidence="4">
    <location>
        <position position="72"/>
    </location>
</feature>
<feature type="modified residue" description="N6-acetyllysine; alternate" evidence="4">
    <location>
        <position position="129"/>
    </location>
</feature>
<feature type="modified residue" description="N6-succinyllysine; alternate" evidence="4">
    <location>
        <position position="129"/>
    </location>
</feature>
<feature type="modified residue" description="N6-acetyllysine" evidence="4">
    <location>
        <position position="208"/>
    </location>
</feature>
<feature type="modified residue" description="N6-acetyllysine; alternate" evidence="4">
    <location>
        <position position="262"/>
    </location>
</feature>
<feature type="modified residue" description="N6-succinyllysine; alternate" evidence="4">
    <location>
        <position position="262"/>
    </location>
</feature>
<feature type="modified residue" description="N6-acetyllysine; alternate" evidence="4">
    <location>
        <position position="306"/>
    </location>
</feature>
<feature type="modified residue" description="N6-succinyllysine; alternate" evidence="4">
    <location>
        <position position="306"/>
    </location>
</feature>
<reference key="1">
    <citation type="submission" date="1996-11" db="EMBL/GenBank/DDBJ databases">
        <title>Isolation of the pig short-chain acyl-CoA dehydrogenase gene and assignment to chromosome 14q16.2-q23.2.</title>
        <authorList>
            <person name="Suzuki H."/>
            <person name="Itoh T."/>
            <person name="Kimura M."/>
            <person name="Murakami Y."/>
            <person name="Hamasima N."/>
            <person name="Yasue H."/>
        </authorList>
    </citation>
    <scope>NUCLEOTIDE SEQUENCE [MRNA]</scope>
    <source>
        <tissue>Liver</tissue>
    </source>
</reference>
<gene>
    <name type="primary">ACADS</name>
</gene>
<comment type="function">
    <text evidence="2">Short-chain specific acyl-CoA dehydrogenase is one of the acyl-CoA dehydrogenases that catalyze the first step of mitochondrial fatty acid beta-oxidation, an aerobic process breaking down fatty acids into acetyl-CoA and allowing the production of energy from fats. The first step of fatty acid beta-oxidation consists in the removal of one hydrogen from C-2 and C-3 of the straight-chain fatty acyl-CoA thioester, resulting in the formation of trans-2-enoyl-CoA. Among the different mitochondrial acyl-CoA dehydrogenases, short-chain specific acyl-CoA dehydrogenase acts specifically on acyl-CoAs with saturated 4 to 6 carbons long primary chains.</text>
</comment>
<comment type="catalytic activity">
    <reaction evidence="3">
        <text>a short-chain 2,3-saturated fatty acyl-CoA + oxidized [electron-transfer flavoprotein] + H(+) = a short-chain (2E)-enoyl-CoA + reduced [electron-transfer flavoprotein]</text>
        <dbReference type="Rhea" id="RHEA:47196"/>
        <dbReference type="Rhea" id="RHEA-COMP:10685"/>
        <dbReference type="Rhea" id="RHEA-COMP:10686"/>
        <dbReference type="ChEBI" id="CHEBI:15378"/>
        <dbReference type="ChEBI" id="CHEBI:57692"/>
        <dbReference type="ChEBI" id="CHEBI:58307"/>
        <dbReference type="ChEBI" id="CHEBI:87487"/>
        <dbReference type="ChEBI" id="CHEBI:87488"/>
        <dbReference type="EC" id="1.3.8.1"/>
    </reaction>
    <physiologicalReaction direction="left-to-right" evidence="3">
        <dbReference type="Rhea" id="RHEA:47197"/>
    </physiologicalReaction>
</comment>
<comment type="catalytic activity">
    <reaction evidence="3">
        <text>butanoyl-CoA + oxidized [electron-transfer flavoprotein] + H(+) = (2E)-butenoyl-CoA + reduced [electron-transfer flavoprotein]</text>
        <dbReference type="Rhea" id="RHEA:24004"/>
        <dbReference type="Rhea" id="RHEA-COMP:10685"/>
        <dbReference type="Rhea" id="RHEA-COMP:10686"/>
        <dbReference type="ChEBI" id="CHEBI:15378"/>
        <dbReference type="ChEBI" id="CHEBI:57332"/>
        <dbReference type="ChEBI" id="CHEBI:57371"/>
        <dbReference type="ChEBI" id="CHEBI:57692"/>
        <dbReference type="ChEBI" id="CHEBI:58307"/>
        <dbReference type="EC" id="1.3.8.1"/>
    </reaction>
    <physiologicalReaction direction="left-to-right" evidence="3">
        <dbReference type="Rhea" id="RHEA:24005"/>
    </physiologicalReaction>
</comment>
<comment type="catalytic activity">
    <reaction evidence="5">
        <text>pentanoyl-CoA + oxidized [electron-transfer flavoprotein] + H(+) = (2E)-pentenoyl-CoA + reduced [electron-transfer flavoprotein]</text>
        <dbReference type="Rhea" id="RHEA:43456"/>
        <dbReference type="Rhea" id="RHEA-COMP:10685"/>
        <dbReference type="Rhea" id="RHEA-COMP:10686"/>
        <dbReference type="ChEBI" id="CHEBI:15378"/>
        <dbReference type="ChEBI" id="CHEBI:57389"/>
        <dbReference type="ChEBI" id="CHEBI:57692"/>
        <dbReference type="ChEBI" id="CHEBI:58307"/>
        <dbReference type="ChEBI" id="CHEBI:86160"/>
    </reaction>
    <physiologicalReaction direction="left-to-right" evidence="3">
        <dbReference type="Rhea" id="RHEA:43457"/>
    </physiologicalReaction>
</comment>
<comment type="catalytic activity">
    <reaction evidence="3">
        <text>hexanoyl-CoA + oxidized [electron-transfer flavoprotein] + H(+) = (2E)-hexenoyl-CoA + reduced [electron-transfer flavoprotein]</text>
        <dbReference type="Rhea" id="RHEA:43464"/>
        <dbReference type="Rhea" id="RHEA-COMP:10685"/>
        <dbReference type="Rhea" id="RHEA-COMP:10686"/>
        <dbReference type="ChEBI" id="CHEBI:15378"/>
        <dbReference type="ChEBI" id="CHEBI:57692"/>
        <dbReference type="ChEBI" id="CHEBI:58307"/>
        <dbReference type="ChEBI" id="CHEBI:62077"/>
        <dbReference type="ChEBI" id="CHEBI:62620"/>
    </reaction>
    <physiologicalReaction direction="left-to-right" evidence="3">
        <dbReference type="Rhea" id="RHEA:43465"/>
    </physiologicalReaction>
</comment>
<comment type="cofactor">
    <cofactor evidence="2">
        <name>FAD</name>
        <dbReference type="ChEBI" id="CHEBI:57692"/>
    </cofactor>
    <text evidence="2">Binds 1 FAD per subunit.</text>
</comment>
<comment type="pathway">
    <text evidence="3">Lipid metabolism; mitochondrial fatty acid beta-oxidation.</text>
</comment>
<comment type="subunit">
    <text evidence="3">Homotetramer.</text>
</comment>
<comment type="subcellular location">
    <subcellularLocation>
        <location evidence="5">Mitochondrion matrix</location>
    </subcellularLocation>
</comment>
<comment type="similarity">
    <text evidence="6">Belongs to the acyl-CoA dehydrogenase family.</text>
</comment>
<sequence length="413" mass="44851">MAAALLARACGPVRGALWPRDCRRLHTIFQSVELPETYQMLRQTCRDFAEKELVPIAAQVDKEHRFPEAQVKKMGELGLMAMDVPEELSGAGLDYLAYTIAMEEISRGCASTGVIMSVNNFLYLGPILKFGSKEQKQQWITPFTSGDKVGCFALSEPGNGSDAGAAATTAQADHDSWVLSGTKAWITNAWEASAAVVFASTDRSLQNKGISAFLVPMPTAGLTLGKKEDKLGIRASSTANLIFEDCRIPKENLLGEPGMGFKIAMKTLDMGRIGIASKALGISQAALDCAVNYAENRRAFGVPLTKLQGIQFKLADMALALESARLLTWRAAMLKDNKKNPFIKEPAMAKLAASEAATAITHQAIQILGGMGYVTEMPAERHYRDARITEIYEGTSEIQRLVIAGHLLKSYRS</sequence>
<organism>
    <name type="scientific">Sus scrofa</name>
    <name type="common">Pig</name>
    <dbReference type="NCBI Taxonomy" id="9823"/>
    <lineage>
        <taxon>Eukaryota</taxon>
        <taxon>Metazoa</taxon>
        <taxon>Chordata</taxon>
        <taxon>Craniata</taxon>
        <taxon>Vertebrata</taxon>
        <taxon>Euteleostomi</taxon>
        <taxon>Mammalia</taxon>
        <taxon>Eutheria</taxon>
        <taxon>Laurasiatheria</taxon>
        <taxon>Artiodactyla</taxon>
        <taxon>Suina</taxon>
        <taxon>Suidae</taxon>
        <taxon>Sus</taxon>
    </lineage>
</organism>
<protein>
    <recommendedName>
        <fullName>Short-chain specific acyl-CoA dehydrogenase, mitochondrial</fullName>
        <shortName>SCAD</shortName>
        <ecNumber evidence="3">1.3.8.1</ecNumber>
    </recommendedName>
    <alternativeName>
        <fullName>Butyryl-CoA dehydrogenase</fullName>
    </alternativeName>
</protein>